<feature type="chain" id="PRO_0000079851" description="Cell division protein DedD">
    <location>
        <begin position="1"/>
        <end position="220"/>
    </location>
</feature>
<feature type="transmembrane region" description="Helical" evidence="1">
    <location>
        <begin position="9"/>
        <end position="29"/>
    </location>
</feature>
<feature type="domain" description="SPOR" evidence="1">
    <location>
        <begin position="138"/>
        <end position="217"/>
    </location>
</feature>
<feature type="region of interest" description="Disordered" evidence="2">
    <location>
        <begin position="46"/>
        <end position="84"/>
    </location>
</feature>
<feature type="region of interest" description="Disordered" evidence="2">
    <location>
        <begin position="97"/>
        <end position="137"/>
    </location>
</feature>
<feature type="compositionally biased region" description="Low complexity" evidence="2">
    <location>
        <begin position="57"/>
        <end position="70"/>
    </location>
</feature>
<feature type="compositionally biased region" description="Pro residues" evidence="2">
    <location>
        <begin position="100"/>
        <end position="109"/>
    </location>
</feature>
<feature type="compositionally biased region" description="Basic and acidic residues" evidence="2">
    <location>
        <begin position="110"/>
        <end position="119"/>
    </location>
</feature>
<feature type="compositionally biased region" description="Basic and acidic residues" evidence="2">
    <location>
        <begin position="127"/>
        <end position="137"/>
    </location>
</feature>
<feature type="strand" evidence="8">
    <location>
        <begin position="33"/>
        <end position="35"/>
    </location>
</feature>
<feature type="strand" evidence="8">
    <location>
        <begin position="45"/>
        <end position="47"/>
    </location>
</feature>
<feature type="strand" evidence="8">
    <location>
        <begin position="53"/>
        <end position="62"/>
    </location>
</feature>
<feature type="strand" evidence="8">
    <location>
        <begin position="77"/>
        <end position="79"/>
    </location>
</feature>
<feature type="turn" evidence="8">
    <location>
        <begin position="89"/>
        <end position="91"/>
    </location>
</feature>
<feature type="helix" evidence="8">
    <location>
        <begin position="93"/>
        <end position="95"/>
    </location>
</feature>
<feature type="strand" evidence="8">
    <location>
        <begin position="100"/>
        <end position="102"/>
    </location>
</feature>
<feature type="strand" evidence="8">
    <location>
        <begin position="115"/>
        <end position="117"/>
    </location>
</feature>
<feature type="strand" evidence="8">
    <location>
        <begin position="139"/>
        <end position="152"/>
    </location>
</feature>
<feature type="helix" evidence="8">
    <location>
        <begin position="154"/>
        <end position="164"/>
    </location>
</feature>
<feature type="helix" evidence="8">
    <location>
        <begin position="165"/>
        <end position="167"/>
    </location>
</feature>
<feature type="strand" evidence="8">
    <location>
        <begin position="171"/>
        <end position="173"/>
    </location>
</feature>
<feature type="strand" evidence="8">
    <location>
        <begin position="184"/>
        <end position="193"/>
    </location>
</feature>
<feature type="helix" evidence="8">
    <location>
        <begin position="194"/>
        <end position="198"/>
    </location>
</feature>
<feature type="helix" evidence="8">
    <location>
        <begin position="201"/>
        <end position="207"/>
    </location>
</feature>
<feature type="strand" evidence="8">
    <location>
        <begin position="213"/>
        <end position="217"/>
    </location>
</feature>
<accession>P09549</accession>
<keyword id="KW-0002">3D-structure</keyword>
<keyword id="KW-0131">Cell cycle</keyword>
<keyword id="KW-0132">Cell division</keyword>
<keyword id="KW-0997">Cell inner membrane</keyword>
<keyword id="KW-1003">Cell membrane</keyword>
<keyword id="KW-0472">Membrane</keyword>
<keyword id="KW-1185">Reference proteome</keyword>
<keyword id="KW-0812">Transmembrane</keyword>
<keyword id="KW-1133">Transmembrane helix</keyword>
<evidence type="ECO:0000255" key="1">
    <source>
        <dbReference type="HAMAP-Rule" id="MF_02022"/>
    </source>
</evidence>
<evidence type="ECO:0000256" key="2">
    <source>
        <dbReference type="SAM" id="MobiDB-lite"/>
    </source>
</evidence>
<evidence type="ECO:0000269" key="3">
    <source>
    </source>
</evidence>
<evidence type="ECO:0000269" key="4">
    <source>
    </source>
</evidence>
<evidence type="ECO:0000269" key="5">
    <source>
    </source>
</evidence>
<evidence type="ECO:0000303" key="6">
    <source>
    </source>
</evidence>
<evidence type="ECO:0000305" key="7"/>
<evidence type="ECO:0007829" key="8">
    <source>
        <dbReference type="PDB" id="6ZTG"/>
    </source>
</evidence>
<reference key="1">
    <citation type="journal article" date="1987" name="J. Biol. Chem.">
        <title>The hisT-purF region of the Escherichia coli K-12 chromosome. Identification of additional genes of the hisT and purF operons.</title>
        <authorList>
            <person name="Nonet M.L."/>
            <person name="Marvel C.C."/>
            <person name="Tolan D.R."/>
        </authorList>
    </citation>
    <scope>NUCLEOTIDE SEQUENCE [GENOMIC DNA]</scope>
    <source>
        <strain>K12</strain>
    </source>
</reference>
<reference key="2">
    <citation type="journal article" date="1997" name="DNA Res.">
        <title>Construction of a contiguous 874-kb sequence of the Escherichia coli-K12 genome corresponding to 50.0-68.8 min on the linkage map and analysis of its sequence features.</title>
        <authorList>
            <person name="Yamamoto Y."/>
            <person name="Aiba H."/>
            <person name="Baba T."/>
            <person name="Hayashi K."/>
            <person name="Inada T."/>
            <person name="Isono K."/>
            <person name="Itoh T."/>
            <person name="Kimura S."/>
            <person name="Kitagawa M."/>
            <person name="Makino K."/>
            <person name="Miki T."/>
            <person name="Mitsuhashi N."/>
            <person name="Mizobuchi K."/>
            <person name="Mori H."/>
            <person name="Nakade S."/>
            <person name="Nakamura Y."/>
            <person name="Nashimoto H."/>
            <person name="Oshima T."/>
            <person name="Oyama S."/>
            <person name="Saito N."/>
            <person name="Sampei G."/>
            <person name="Satoh Y."/>
            <person name="Sivasundaram S."/>
            <person name="Tagami H."/>
            <person name="Takahashi H."/>
            <person name="Takeda J."/>
            <person name="Takemoto K."/>
            <person name="Uehara K."/>
            <person name="Wada C."/>
            <person name="Yamagata S."/>
            <person name="Horiuchi T."/>
        </authorList>
    </citation>
    <scope>NUCLEOTIDE SEQUENCE [LARGE SCALE GENOMIC DNA]</scope>
    <source>
        <strain>K12 / W3110 / ATCC 27325 / DSM 5911</strain>
    </source>
</reference>
<reference key="3">
    <citation type="journal article" date="1997" name="Science">
        <title>The complete genome sequence of Escherichia coli K-12.</title>
        <authorList>
            <person name="Blattner F.R."/>
            <person name="Plunkett G. III"/>
            <person name="Bloch C.A."/>
            <person name="Perna N.T."/>
            <person name="Burland V."/>
            <person name="Riley M."/>
            <person name="Collado-Vides J."/>
            <person name="Glasner J.D."/>
            <person name="Rode C.K."/>
            <person name="Mayhew G.F."/>
            <person name="Gregor J."/>
            <person name="Davis N.W."/>
            <person name="Kirkpatrick H.A."/>
            <person name="Goeden M.A."/>
            <person name="Rose D.J."/>
            <person name="Mau B."/>
            <person name="Shao Y."/>
        </authorList>
    </citation>
    <scope>NUCLEOTIDE SEQUENCE [LARGE SCALE GENOMIC DNA]</scope>
    <source>
        <strain>K12 / MG1655 / ATCC 47076</strain>
    </source>
</reference>
<reference key="4">
    <citation type="journal article" date="2006" name="Mol. Syst. Biol.">
        <title>Highly accurate genome sequences of Escherichia coli K-12 strains MG1655 and W3110.</title>
        <authorList>
            <person name="Hayashi K."/>
            <person name="Morooka N."/>
            <person name="Yamamoto Y."/>
            <person name="Fujita K."/>
            <person name="Isono K."/>
            <person name="Choi S."/>
            <person name="Ohtsubo E."/>
            <person name="Baba T."/>
            <person name="Wanner B.L."/>
            <person name="Mori H."/>
            <person name="Horiuchi T."/>
        </authorList>
    </citation>
    <scope>NUCLEOTIDE SEQUENCE [LARGE SCALE GENOMIC DNA]</scope>
    <source>
        <strain>K12 / W3110 / ATCC 27325 / DSM 5911</strain>
    </source>
</reference>
<reference key="5">
    <citation type="journal article" date="2009" name="J. Bacteriol.">
        <title>Self-enhanced accumulation of FtsN at division sites and roles for other proteins with a SPOR domain (DamX, DedD, and RlpA) in Escherichia coli cell constriction.</title>
        <authorList>
            <person name="Gerding M.A."/>
            <person name="Liu B."/>
            <person name="Bendezu F.O."/>
            <person name="Hale C.A."/>
            <person name="Bernhardt T.G."/>
            <person name="de Boer P.A."/>
        </authorList>
    </citation>
    <scope>FUNCTION</scope>
    <scope>SUBCELLULAR LOCATION</scope>
    <scope>DISRUPTION PHENOTYPE</scope>
    <source>
        <strain>K12 / MG1655 / ATCC 47076</strain>
    </source>
</reference>
<reference key="6">
    <citation type="journal article" date="2010" name="J. Bacteriol.">
        <title>Discovery and characterization of three new Escherichia coli septal ring proteins that contain a SPOR domain: DamX, DedD, and RlpA.</title>
        <authorList>
            <person name="Arends S.J."/>
            <person name="Williams K."/>
            <person name="Scott R.J."/>
            <person name="Rolong S."/>
            <person name="Popham D.L."/>
            <person name="Weiss D.S."/>
        </authorList>
    </citation>
    <scope>SUBCELLULAR LOCATION</scope>
    <scope>DOMAIN</scope>
    <source>
        <strain>K12 / BW25113</strain>
    </source>
</reference>
<reference key="7">
    <citation type="journal article" date="2020" name="J. Bacteriol.">
        <title>DrpB (YedR) is a non-essential cell division protein in Escherichia coli.</title>
        <authorList>
            <person name="Yahashiri A."/>
            <person name="Babor J.T."/>
            <person name="Anwar A.L."/>
            <person name="Bezy R.P."/>
            <person name="Piette E.W."/>
            <person name="Ryan Arends S.J."/>
            <person name="Mueh U."/>
            <person name="Steffen M.R."/>
            <person name="Cline J.M."/>
            <person name="Stanek D.N."/>
            <person name="Lister S.D."/>
            <person name="Swanson S.M."/>
            <person name="Weiss D.S."/>
        </authorList>
    </citation>
    <scope>DISRUPTION PHENOTYPE</scope>
    <source>
        <strain>K12 / MG1655 / ATCC 47076</strain>
    </source>
</reference>
<proteinExistence type="evidence at protein level"/>
<gene>
    <name evidence="1 6" type="primary">dedD</name>
    <name type="ordered locus">b2314</name>
    <name type="ordered locus">JW5378</name>
</gene>
<organism>
    <name type="scientific">Escherichia coli (strain K12)</name>
    <dbReference type="NCBI Taxonomy" id="83333"/>
    <lineage>
        <taxon>Bacteria</taxon>
        <taxon>Pseudomonadati</taxon>
        <taxon>Pseudomonadota</taxon>
        <taxon>Gammaproteobacteria</taxon>
        <taxon>Enterobacterales</taxon>
        <taxon>Enterobacteriaceae</taxon>
        <taxon>Escherichia</taxon>
    </lineage>
</organism>
<dbReference type="EMBL" id="AH000881">
    <property type="protein sequence ID" value="AAA23967.1"/>
    <property type="status" value="ALT_INIT"/>
    <property type="molecule type" value="Genomic_DNA"/>
</dbReference>
<dbReference type="EMBL" id="U00096">
    <property type="protein sequence ID" value="AAC75374.2"/>
    <property type="molecule type" value="Genomic_DNA"/>
</dbReference>
<dbReference type="EMBL" id="AP009048">
    <property type="protein sequence ID" value="BAA16162.2"/>
    <property type="molecule type" value="Genomic_DNA"/>
</dbReference>
<dbReference type="PIR" id="H65003">
    <property type="entry name" value="XMECDD"/>
</dbReference>
<dbReference type="RefSeq" id="NP_416817.2">
    <property type="nucleotide sequence ID" value="NC_000913.3"/>
</dbReference>
<dbReference type="RefSeq" id="WP_000146992.1">
    <property type="nucleotide sequence ID" value="NZ_STEB01000008.1"/>
</dbReference>
<dbReference type="PDB" id="6ZTG">
    <property type="method" value="NMR"/>
    <property type="chains" value="A=28-220"/>
</dbReference>
<dbReference type="PDBsum" id="6ZTG"/>
<dbReference type="SMR" id="P09549"/>
<dbReference type="BioGRID" id="4260528">
    <property type="interactions" value="68"/>
</dbReference>
<dbReference type="FunCoup" id="P09549">
    <property type="interactions" value="62"/>
</dbReference>
<dbReference type="STRING" id="511145.b2314"/>
<dbReference type="jPOST" id="P09549"/>
<dbReference type="PaxDb" id="511145-b2314"/>
<dbReference type="EnsemblBacteria" id="AAC75374">
    <property type="protein sequence ID" value="AAC75374"/>
    <property type="gene ID" value="b2314"/>
</dbReference>
<dbReference type="GeneID" id="93774860"/>
<dbReference type="GeneID" id="944971"/>
<dbReference type="KEGG" id="ecj:JW5378"/>
<dbReference type="KEGG" id="eco:b2314"/>
<dbReference type="KEGG" id="ecoc:C3026_12900"/>
<dbReference type="PATRIC" id="fig|511145.12.peg.2409"/>
<dbReference type="EchoBASE" id="EB0214"/>
<dbReference type="eggNOG" id="COG3147">
    <property type="taxonomic scope" value="Bacteria"/>
</dbReference>
<dbReference type="HOGENOM" id="CLU_068683_1_1_6"/>
<dbReference type="InParanoid" id="P09549"/>
<dbReference type="OMA" id="GYNAYIR"/>
<dbReference type="OrthoDB" id="7069135at2"/>
<dbReference type="PhylomeDB" id="P09549"/>
<dbReference type="BioCyc" id="EcoCyc:EG10218-MONOMER"/>
<dbReference type="PRO" id="PR:P09549"/>
<dbReference type="Proteomes" id="UP000000625">
    <property type="component" value="Chromosome"/>
</dbReference>
<dbReference type="GO" id="GO:0032153">
    <property type="term" value="C:cell division site"/>
    <property type="evidence" value="ECO:0000314"/>
    <property type="project" value="EcoCyc"/>
</dbReference>
<dbReference type="GO" id="GO:0030428">
    <property type="term" value="C:cell septum"/>
    <property type="evidence" value="ECO:0000314"/>
    <property type="project" value="EcoCyc"/>
</dbReference>
<dbReference type="GO" id="GO:0005886">
    <property type="term" value="C:plasma membrane"/>
    <property type="evidence" value="ECO:0007669"/>
    <property type="project" value="UniProtKB-SubCell"/>
</dbReference>
<dbReference type="GO" id="GO:0008047">
    <property type="term" value="F:enzyme activator activity"/>
    <property type="evidence" value="ECO:0000314"/>
    <property type="project" value="EcoCyc"/>
</dbReference>
<dbReference type="GO" id="GO:0042834">
    <property type="term" value="F:peptidoglycan binding"/>
    <property type="evidence" value="ECO:0000314"/>
    <property type="project" value="EcoCyc"/>
</dbReference>
<dbReference type="GO" id="GO:0032506">
    <property type="term" value="P:cytokinetic process"/>
    <property type="evidence" value="ECO:0000315"/>
    <property type="project" value="EcoCyc"/>
</dbReference>
<dbReference type="FunFam" id="3.30.70.1070:FF:000001">
    <property type="entry name" value="Cell division protein DedD"/>
    <property type="match status" value="1"/>
</dbReference>
<dbReference type="Gene3D" id="3.30.70.1070">
    <property type="entry name" value="Sporulation related repeat"/>
    <property type="match status" value="1"/>
</dbReference>
<dbReference type="HAMAP" id="MF_02022">
    <property type="entry name" value="DedD"/>
    <property type="match status" value="1"/>
</dbReference>
<dbReference type="InterPro" id="IPR052521">
    <property type="entry name" value="Cell_div_SPOR-domain"/>
</dbReference>
<dbReference type="InterPro" id="IPR032898">
    <property type="entry name" value="DedD"/>
</dbReference>
<dbReference type="InterPro" id="IPR007730">
    <property type="entry name" value="SPOR-like_dom"/>
</dbReference>
<dbReference type="InterPro" id="IPR036680">
    <property type="entry name" value="SPOR-like_sf"/>
</dbReference>
<dbReference type="NCBIfam" id="NF008641">
    <property type="entry name" value="PRK11633.1"/>
    <property type="match status" value="1"/>
</dbReference>
<dbReference type="PANTHER" id="PTHR38687:SF1">
    <property type="entry name" value="CELL DIVISION PROTEIN DEDD"/>
    <property type="match status" value="1"/>
</dbReference>
<dbReference type="PANTHER" id="PTHR38687">
    <property type="entry name" value="CELL DIVISION PROTEIN DEDD-RELATED"/>
    <property type="match status" value="1"/>
</dbReference>
<dbReference type="Pfam" id="PF05036">
    <property type="entry name" value="SPOR"/>
    <property type="match status" value="1"/>
</dbReference>
<dbReference type="SUPFAM" id="SSF110997">
    <property type="entry name" value="Sporulation related repeat"/>
    <property type="match status" value="1"/>
</dbReference>
<dbReference type="PROSITE" id="PS51724">
    <property type="entry name" value="SPOR"/>
    <property type="match status" value="1"/>
</dbReference>
<protein>
    <recommendedName>
        <fullName evidence="1 7">Cell division protein DedD</fullName>
    </recommendedName>
</protein>
<comment type="function">
    <text evidence="1 3">Non-essential cell division protein that could be required for efficient cell constriction.</text>
</comment>
<comment type="subcellular location">
    <subcellularLocation>
        <location evidence="1 7">Cell inner membrane</location>
        <topology evidence="1">Single-pass membrane protein</topology>
    </subcellularLocation>
    <text evidence="1 3 4">Localizes at the septal ring.</text>
</comment>
<comment type="domain">
    <text evidence="1 4">The SPOR domain binds septal peptidoglycans and is required to target DedD to the septal ring.</text>
</comment>
<comment type="disruption phenotype">
    <text evidence="3 5">Deletion causes a mild cell chaining phenotype (PubMed:19684127). Double dedD-drpB deletion mutants grow 1000-fold less well at 42 degrees Celsius and are filamentous when grown on LB, no effect is seen in low osmolarity medium; few septa are observed (PubMed:32900831).</text>
</comment>
<comment type="similarity">
    <text evidence="1 7">Belongs to the DedD family.</text>
</comment>
<comment type="sequence caution" evidence="7">
    <conflict type="erroneous initiation">
        <sequence resource="EMBL-CDS" id="AAA23967"/>
    </conflict>
    <text>Truncated N-terminus.</text>
</comment>
<name>DEDD_ECOLI</name>
<sequence>MASKFQNRLVGTIVLVALGVIVLPGLLDGQKKHYQDEFAAIPLVPKAGDRDEPDMMPAATQALPTQPPEGAAEEVRAGDAAAPSLDPATIAANNTEFEPEPAPVAPPKPKPVEPPKPKVEAPPAPKPEPKPVVEEKAAPTGKAYVVQLGALKNADKVNEIVGKLRGAGYRVYTSPSTPVQGKITRILVGPDASKDKLKGSLGELKQLSGLSGVVMGYTPN</sequence>